<keyword id="KW-0004">4Fe-4S</keyword>
<keyword id="KW-0010">Activator</keyword>
<keyword id="KW-0238">DNA-binding</keyword>
<keyword id="KW-0408">Iron</keyword>
<keyword id="KW-0411">Iron-sulfur</keyword>
<keyword id="KW-0479">Metal-binding</keyword>
<keyword id="KW-0804">Transcription</keyword>
<keyword id="KW-0805">Transcription regulation</keyword>
<keyword id="KW-0843">Virulence</keyword>
<protein>
    <recommendedName>
        <fullName>Anaerobic regulatory protein</fullName>
    </recommendedName>
</protein>
<proteinExistence type="evidence at transcript level"/>
<feature type="chain" id="PRO_0000100172" description="Anaerobic regulatory protein">
    <location>
        <begin position="1"/>
        <end position="257"/>
    </location>
</feature>
<feature type="domain" description="HTH crp-type" evidence="3">
    <location>
        <begin position="167"/>
        <end position="240"/>
    </location>
</feature>
<feature type="DNA-binding region" description="H-T-H motif" evidence="3">
    <location>
        <begin position="200"/>
        <end position="219"/>
    </location>
</feature>
<feature type="region of interest" description="Essential for the oxygen-regulated activity" evidence="1">
    <location>
        <begin position="23"/>
        <end position="32"/>
    </location>
</feature>
<feature type="binding site" evidence="2">
    <location>
        <position position="23"/>
    </location>
    <ligand>
        <name>[4Fe-4S] cluster</name>
        <dbReference type="ChEBI" id="CHEBI:49883"/>
    </ligand>
</feature>
<feature type="binding site" evidence="2">
    <location>
        <position position="26"/>
    </location>
    <ligand>
        <name>[4Fe-4S] cluster</name>
        <dbReference type="ChEBI" id="CHEBI:49883"/>
    </ligand>
</feature>
<feature type="binding site" evidence="2">
    <location>
        <position position="32"/>
    </location>
    <ligand>
        <name>[4Fe-4S] cluster</name>
        <dbReference type="ChEBI" id="CHEBI:49883"/>
    </ligand>
</feature>
<feature type="binding site" evidence="2">
    <location>
        <position position="125"/>
    </location>
    <ligand>
        <name>[4Fe-4S] cluster</name>
        <dbReference type="ChEBI" id="CHEBI:49883"/>
    </ligand>
</feature>
<feature type="sequence conflict" description="In Ref. 2; BAA11315." evidence="4" ref="2">
    <original>F</original>
    <variation>S</variation>
    <location>
        <position position="189"/>
    </location>
</feature>
<reference key="1">
    <citation type="journal article" date="2000" name="Res. Microbiol.">
        <title>Molecular characterization of the hlyX-like gene of Actinobacillus actinomycetemcomitans Y4.</title>
        <authorList>
            <person name="Kokeguchi S."/>
            <person name="Hirosue M."/>
            <person name="Maeda H."/>
            <person name="Miyamoto M."/>
            <person name="Takashiba S."/>
            <person name="Murayama Y."/>
        </authorList>
    </citation>
    <scope>NUCLEOTIDE SEQUENCE [GENOMIC DNA]</scope>
    <source>
        <strain>ATCC 43718 / FDC Y4 / Serotype b</strain>
    </source>
</reference>
<reference key="2">
    <citation type="journal article" date="1996" name="FEMS Microbiol. Lett.">
        <title>Novel FNR homologues identified in four representative oral facultative anaerobes: Capnocytophaga ochracea, Capnocytophaga sputigena, Haemophilus aphrophilus, and Actinobacillus actinomycetemcomitans.</title>
        <authorList>
            <person name="Hattori T."/>
            <person name="Takahashi K."/>
            <person name="Nakanishi T."/>
            <person name="Ohta H."/>
            <person name="Fukui K."/>
            <person name="Taniguchi S."/>
            <person name="Takigawa M."/>
        </authorList>
    </citation>
    <scope>NUCLEOTIDE SEQUENCE [GENOMIC DNA] OF 125-216</scope>
    <source>
        <strain>301-b / Serotype a</strain>
    </source>
</reference>
<organism>
    <name type="scientific">Aggregatibacter actinomycetemcomitans</name>
    <name type="common">Actinobacillus actinomycetemcomitans</name>
    <name type="synonym">Haemophilus actinomycetemcomitans</name>
    <dbReference type="NCBI Taxonomy" id="714"/>
    <lineage>
        <taxon>Bacteria</taxon>
        <taxon>Pseudomonadati</taxon>
        <taxon>Pseudomonadota</taxon>
        <taxon>Gammaproteobacteria</taxon>
        <taxon>Pasteurellales</taxon>
        <taxon>Pasteurellaceae</taxon>
        <taxon>Aggregatibacter</taxon>
    </lineage>
</organism>
<name>FNR_AGGAC</name>
<dbReference type="EMBL" id="D89096">
    <property type="protein sequence ID" value="BAB19627.1"/>
    <property type="molecule type" value="Genomic_DNA"/>
</dbReference>
<dbReference type="EMBL" id="D78251">
    <property type="protein sequence ID" value="BAA11315.1"/>
    <property type="molecule type" value="Genomic_DNA"/>
</dbReference>
<dbReference type="RefSeq" id="WP_005568756.1">
    <property type="nucleotide sequence ID" value="NZ_JAJHPH010000020.1"/>
</dbReference>
<dbReference type="SMR" id="Q9EXQ1"/>
<dbReference type="STRING" id="714.ACT75_00055"/>
<dbReference type="eggNOG" id="COG0664">
    <property type="taxonomic scope" value="Bacteria"/>
</dbReference>
<dbReference type="GO" id="GO:0005829">
    <property type="term" value="C:cytosol"/>
    <property type="evidence" value="ECO:0007669"/>
    <property type="project" value="TreeGrafter"/>
</dbReference>
<dbReference type="GO" id="GO:0051539">
    <property type="term" value="F:4 iron, 4 sulfur cluster binding"/>
    <property type="evidence" value="ECO:0007669"/>
    <property type="project" value="UniProtKB-KW"/>
</dbReference>
<dbReference type="GO" id="GO:0003677">
    <property type="term" value="F:DNA binding"/>
    <property type="evidence" value="ECO:0007669"/>
    <property type="project" value="UniProtKB-KW"/>
</dbReference>
<dbReference type="GO" id="GO:0003700">
    <property type="term" value="F:DNA-binding transcription factor activity"/>
    <property type="evidence" value="ECO:0007669"/>
    <property type="project" value="InterPro"/>
</dbReference>
<dbReference type="GO" id="GO:0046872">
    <property type="term" value="F:metal ion binding"/>
    <property type="evidence" value="ECO:0007669"/>
    <property type="project" value="UniProtKB-KW"/>
</dbReference>
<dbReference type="CDD" id="cd00038">
    <property type="entry name" value="CAP_ED"/>
    <property type="match status" value="1"/>
</dbReference>
<dbReference type="CDD" id="cd00092">
    <property type="entry name" value="HTH_CRP"/>
    <property type="match status" value="1"/>
</dbReference>
<dbReference type="FunFam" id="1.10.10.10:FF:000028">
    <property type="entry name" value="Fumarate/nitrate reduction transcriptional regulator Fnr"/>
    <property type="match status" value="1"/>
</dbReference>
<dbReference type="FunFam" id="2.60.120.10:FF:000004">
    <property type="entry name" value="Fumarate/nitrate reduction transcriptional regulator Fnr"/>
    <property type="match status" value="1"/>
</dbReference>
<dbReference type="Gene3D" id="2.60.120.10">
    <property type="entry name" value="Jelly Rolls"/>
    <property type="match status" value="1"/>
</dbReference>
<dbReference type="Gene3D" id="1.10.10.10">
    <property type="entry name" value="Winged helix-like DNA-binding domain superfamily/Winged helix DNA-binding domain"/>
    <property type="match status" value="1"/>
</dbReference>
<dbReference type="InterPro" id="IPR000595">
    <property type="entry name" value="cNMP-bd_dom"/>
</dbReference>
<dbReference type="InterPro" id="IPR018490">
    <property type="entry name" value="cNMP-bd_dom_sf"/>
</dbReference>
<dbReference type="InterPro" id="IPR050397">
    <property type="entry name" value="Env_Response_Regulators"/>
</dbReference>
<dbReference type="InterPro" id="IPR012318">
    <property type="entry name" value="HTH_CRP"/>
</dbReference>
<dbReference type="InterPro" id="IPR014710">
    <property type="entry name" value="RmlC-like_jellyroll"/>
</dbReference>
<dbReference type="InterPro" id="IPR018335">
    <property type="entry name" value="Tscrpt_reg_HTH_Crp-type_CS"/>
</dbReference>
<dbReference type="InterPro" id="IPR036388">
    <property type="entry name" value="WH-like_DNA-bd_sf"/>
</dbReference>
<dbReference type="InterPro" id="IPR036390">
    <property type="entry name" value="WH_DNA-bd_sf"/>
</dbReference>
<dbReference type="NCBIfam" id="NF008365">
    <property type="entry name" value="PRK11161.1"/>
    <property type="match status" value="1"/>
</dbReference>
<dbReference type="PANTHER" id="PTHR24567">
    <property type="entry name" value="CRP FAMILY TRANSCRIPTIONAL REGULATORY PROTEIN"/>
    <property type="match status" value="1"/>
</dbReference>
<dbReference type="PANTHER" id="PTHR24567:SF75">
    <property type="entry name" value="FUMARATE AND NITRATE REDUCTION REGULATORY PROTEIN"/>
    <property type="match status" value="1"/>
</dbReference>
<dbReference type="Pfam" id="PF00027">
    <property type="entry name" value="cNMP_binding"/>
    <property type="match status" value="1"/>
</dbReference>
<dbReference type="Pfam" id="PF13545">
    <property type="entry name" value="HTH_Crp_2"/>
    <property type="match status" value="1"/>
</dbReference>
<dbReference type="PRINTS" id="PR00034">
    <property type="entry name" value="HTHCRP"/>
</dbReference>
<dbReference type="SMART" id="SM00100">
    <property type="entry name" value="cNMP"/>
    <property type="match status" value="1"/>
</dbReference>
<dbReference type="SMART" id="SM00419">
    <property type="entry name" value="HTH_CRP"/>
    <property type="match status" value="1"/>
</dbReference>
<dbReference type="SUPFAM" id="SSF51206">
    <property type="entry name" value="cAMP-binding domain-like"/>
    <property type="match status" value="1"/>
</dbReference>
<dbReference type="SUPFAM" id="SSF46785">
    <property type="entry name" value="Winged helix' DNA-binding domain"/>
    <property type="match status" value="1"/>
</dbReference>
<dbReference type="PROSITE" id="PS50042">
    <property type="entry name" value="CNMP_BINDING_3"/>
    <property type="match status" value="1"/>
</dbReference>
<dbReference type="PROSITE" id="PS00042">
    <property type="entry name" value="HTH_CRP_1"/>
    <property type="match status" value="1"/>
</dbReference>
<dbReference type="PROSITE" id="PS51063">
    <property type="entry name" value="HTH_CRP_2"/>
    <property type="match status" value="1"/>
</dbReference>
<accession>Q9EXQ1</accession>
<accession>Q46157</accession>
<comment type="function">
    <text>It is involved in the activation of genes necessary for anaerobic respiration. It probably also activates genes involved in the production of virulence factors.</text>
</comment>
<comment type="cofactor">
    <cofactor evidence="1">
        <name>[4Fe-4S] cluster</name>
        <dbReference type="ChEBI" id="CHEBI:49883"/>
    </cofactor>
    <text evidence="1">Binds 1 [4Fe-4S] cluster per subunit.</text>
</comment>
<comment type="subunit">
    <text evidence="1">Homodimer.</text>
</comment>
<comment type="induction">
    <text>By anaerobiosis.</text>
</comment>
<evidence type="ECO:0000250" key="1"/>
<evidence type="ECO:0000255" key="2"/>
<evidence type="ECO:0000255" key="3">
    <source>
        <dbReference type="PROSITE-ProRule" id="PRU00387"/>
    </source>
</evidence>
<evidence type="ECO:0000305" key="4"/>
<gene>
    <name type="primary">fnr</name>
    <name type="synonym">actX</name>
</gene>
<sequence length="257" mass="28929">MKILATETKLGRRVQSGGCAIHCQNCSISQLCIPFTLNQHELDQLDNIIERKKPIQKSQVLFKAGDELTSLYAIRSGTIKSYTISETGEEQITSFHLPGDLVGFDAIMNMQHPSFAQALETAMVCEIPFDILDDLSGKMPKLRQQIMRLMSNEIKSDQEMILLLSKMNAEERLAAFIYNLSQRYSARGFSAREFRLTMTRGDIGNYLGLTVETISRLLGRFQKLGVLSVQGKYITINNMAELIELSGTNKNKIQLII</sequence>